<sequence>MNLRIGVIGTGAIGKEHINRITNKLSGAEITAVTDVNQEAAQQTVQDFNLNASVYPDDDSLLAAENVDAVLVTSWGPAHESSVLKAIQHGKHVFCEKPLATTAEGCMRIVEEEMKTGKRLVQVGFMRRYDSGYVQLKEAIDNRVVGEPLMIHCAHRNPTVASNYSTEMAVVDTLVHEIDVLHWLVNDDYESVQVIYPKKSKNALPHLKDPQMVIIETKGGIVINAEIYVNCKYGYDIQCEIVGEDGIIKLPEPSSISLRKEGKFSTDILMDWQRRFVAAYDVEIQDFIDSIRNKGEVSGPTAWDGYIAAVTTDACVKAQESGQKEPVALQEKPAFYQSFTTVNK</sequence>
<reference key="1">
    <citation type="journal article" date="2007" name="Nat. Biotechnol.">
        <title>Comparative analysis of the complete genome sequence of the plant growth-promoting bacterium Bacillus amyloliquefaciens FZB42.</title>
        <authorList>
            <person name="Chen X.H."/>
            <person name="Koumoutsi A."/>
            <person name="Scholz R."/>
            <person name="Eisenreich A."/>
            <person name="Schneider K."/>
            <person name="Heinemeyer I."/>
            <person name="Morgenstern B."/>
            <person name="Voss B."/>
            <person name="Hess W.R."/>
            <person name="Reva O."/>
            <person name="Junge H."/>
            <person name="Voigt B."/>
            <person name="Jungblut P.R."/>
            <person name="Vater J."/>
            <person name="Suessmuth R."/>
            <person name="Liesegang H."/>
            <person name="Strittmatter A."/>
            <person name="Gottschalk G."/>
            <person name="Borriss R."/>
        </authorList>
    </citation>
    <scope>NUCLEOTIDE SEQUENCE [LARGE SCALE GENOMIC DNA]</scope>
    <source>
        <strain>DSM 23117 / BGSC 10A6 / LMG 26770 / FZB42</strain>
    </source>
</reference>
<keyword id="KW-0520">NAD</keyword>
<keyword id="KW-0560">Oxidoreductase</keyword>
<proteinExistence type="inferred from homology"/>
<evidence type="ECO:0000255" key="1">
    <source>
        <dbReference type="HAMAP-Rule" id="MF_01671"/>
    </source>
</evidence>
<name>IOLG_BACVZ</name>
<comment type="function">
    <text evidence="1">Involved in the oxidation of myo-inositol (MI) and D-chiro-inositol (DCI) to 2-keto-myo-inositol (2KMI or 2-inosose) and 1-keto-D-chiro-inositol (1KDCI), respectively.</text>
</comment>
<comment type="catalytic activity">
    <reaction evidence="1">
        <text>myo-inositol + NAD(+) = scyllo-inosose + NADH + H(+)</text>
        <dbReference type="Rhea" id="RHEA:16949"/>
        <dbReference type="ChEBI" id="CHEBI:15378"/>
        <dbReference type="ChEBI" id="CHEBI:17268"/>
        <dbReference type="ChEBI" id="CHEBI:17811"/>
        <dbReference type="ChEBI" id="CHEBI:57540"/>
        <dbReference type="ChEBI" id="CHEBI:57945"/>
        <dbReference type="EC" id="1.1.1.18"/>
    </reaction>
</comment>
<comment type="catalytic activity">
    <reaction evidence="1">
        <text>1D-chiro-inositol + NAD(+) = scyllo-inosine + NADH + H(+)</text>
        <dbReference type="Rhea" id="RHEA:25832"/>
        <dbReference type="ChEBI" id="CHEBI:15378"/>
        <dbReference type="ChEBI" id="CHEBI:27372"/>
        <dbReference type="ChEBI" id="CHEBI:50920"/>
        <dbReference type="ChEBI" id="CHEBI:57540"/>
        <dbReference type="ChEBI" id="CHEBI:57945"/>
        <dbReference type="EC" id="1.1.1.369"/>
    </reaction>
</comment>
<comment type="pathway">
    <text evidence="1">Polyol metabolism; myo-inositol degradation into acetyl-CoA; acetyl-CoA from myo-inositol: step 1/7.</text>
</comment>
<comment type="subunit">
    <text evidence="1">Homotetramer.</text>
</comment>
<comment type="similarity">
    <text evidence="1">Belongs to the Gfo/Idh/MocA family.</text>
</comment>
<feature type="chain" id="PRO_0000352554" description="Inositol 2-dehydrogenase/D-chiro-inositol 3-dehydrogenase">
    <location>
        <begin position="1"/>
        <end position="344"/>
    </location>
</feature>
<accession>A7ZAH5</accession>
<gene>
    <name evidence="1" type="primary">iolG</name>
    <name type="ordered locus">RBAM_036720</name>
</gene>
<organism>
    <name type="scientific">Bacillus velezensis (strain DSM 23117 / BGSC 10A6 / LMG 26770 / FZB42)</name>
    <name type="common">Bacillus amyloliquefaciens subsp. plantarum</name>
    <dbReference type="NCBI Taxonomy" id="326423"/>
    <lineage>
        <taxon>Bacteria</taxon>
        <taxon>Bacillati</taxon>
        <taxon>Bacillota</taxon>
        <taxon>Bacilli</taxon>
        <taxon>Bacillales</taxon>
        <taxon>Bacillaceae</taxon>
        <taxon>Bacillus</taxon>
        <taxon>Bacillus amyloliquefaciens group</taxon>
    </lineage>
</organism>
<protein>
    <recommendedName>
        <fullName evidence="1">Inositol 2-dehydrogenase/D-chiro-inositol 3-dehydrogenase</fullName>
        <ecNumber evidence="1">1.1.1.18</ecNumber>
        <ecNumber evidence="1">1.1.1.369</ecNumber>
    </recommendedName>
    <alternativeName>
        <fullName evidence="1">Myo-inositol 2-dehydrogenase/D-chiro-inositol 3-dehydrogenase</fullName>
        <shortName evidence="1">MI 2-dehydrogenase/DCI 3-dehydrogenase</shortName>
    </alternativeName>
</protein>
<dbReference type="EC" id="1.1.1.18" evidence="1"/>
<dbReference type="EC" id="1.1.1.369" evidence="1"/>
<dbReference type="EMBL" id="CP000560">
    <property type="protein sequence ID" value="ABS76001.1"/>
    <property type="molecule type" value="Genomic_DNA"/>
</dbReference>
<dbReference type="RefSeq" id="WP_012118842.1">
    <property type="nucleotide sequence ID" value="NC_009725.2"/>
</dbReference>
<dbReference type="SMR" id="A7ZAH5"/>
<dbReference type="GeneID" id="93082811"/>
<dbReference type="KEGG" id="bay:RBAM_036720"/>
<dbReference type="HOGENOM" id="CLU_023194_0_1_9"/>
<dbReference type="UniPathway" id="UPA00076">
    <property type="reaction ID" value="UER00143"/>
</dbReference>
<dbReference type="Proteomes" id="UP000001120">
    <property type="component" value="Chromosome"/>
</dbReference>
<dbReference type="GO" id="GO:0050112">
    <property type="term" value="F:inositol 2-dehydrogenase (NAD+) activity"/>
    <property type="evidence" value="ECO:0007669"/>
    <property type="project" value="UniProtKB-UniRule"/>
</dbReference>
<dbReference type="GO" id="GO:0000166">
    <property type="term" value="F:nucleotide binding"/>
    <property type="evidence" value="ECO:0007669"/>
    <property type="project" value="InterPro"/>
</dbReference>
<dbReference type="GO" id="GO:0019310">
    <property type="term" value="P:inositol catabolic process"/>
    <property type="evidence" value="ECO:0007669"/>
    <property type="project" value="UniProtKB-UniRule"/>
</dbReference>
<dbReference type="Gene3D" id="3.30.360.10">
    <property type="entry name" value="Dihydrodipicolinate Reductase, domain 2"/>
    <property type="match status" value="1"/>
</dbReference>
<dbReference type="Gene3D" id="3.40.50.720">
    <property type="entry name" value="NAD(P)-binding Rossmann-like Domain"/>
    <property type="match status" value="1"/>
</dbReference>
<dbReference type="HAMAP" id="MF_01671">
    <property type="entry name" value="IolG"/>
    <property type="match status" value="1"/>
</dbReference>
<dbReference type="InterPro" id="IPR050424">
    <property type="entry name" value="Gfo-Idh-MocA_inositol_DH"/>
</dbReference>
<dbReference type="InterPro" id="IPR004104">
    <property type="entry name" value="Gfo/Idh/MocA-like_OxRdtase_C"/>
</dbReference>
<dbReference type="InterPro" id="IPR000683">
    <property type="entry name" value="Gfo/Idh/MocA-like_OxRdtase_N"/>
</dbReference>
<dbReference type="InterPro" id="IPR023794">
    <property type="entry name" value="MI/DCI_dehydrogenase"/>
</dbReference>
<dbReference type="InterPro" id="IPR036291">
    <property type="entry name" value="NAD(P)-bd_dom_sf"/>
</dbReference>
<dbReference type="PANTHER" id="PTHR43593">
    <property type="match status" value="1"/>
</dbReference>
<dbReference type="PANTHER" id="PTHR43593:SF1">
    <property type="entry name" value="INOSITOL 2-DEHYDROGENASE"/>
    <property type="match status" value="1"/>
</dbReference>
<dbReference type="Pfam" id="PF01408">
    <property type="entry name" value="GFO_IDH_MocA"/>
    <property type="match status" value="1"/>
</dbReference>
<dbReference type="Pfam" id="PF02894">
    <property type="entry name" value="GFO_IDH_MocA_C"/>
    <property type="match status" value="1"/>
</dbReference>
<dbReference type="SUPFAM" id="SSF55347">
    <property type="entry name" value="Glyceraldehyde-3-phosphate dehydrogenase-like, C-terminal domain"/>
    <property type="match status" value="1"/>
</dbReference>
<dbReference type="SUPFAM" id="SSF51735">
    <property type="entry name" value="NAD(P)-binding Rossmann-fold domains"/>
    <property type="match status" value="1"/>
</dbReference>